<sequence>MTELVTGKAFPYVVVTGIAMTTALATDAETTWKLLLDRQSGIRTLDDPFVEEFDLPVRIGGHLLEEFDHQLTRIELRRMGYLQRMSTVLSRRLWENAGSPEVDTNRLMVSIGTGLGSAEELVFSYDDMRARGMKAVSPLTVQKYMPNGAAAAVGLERHAKAGVMTPVSACASGAEAIARAWQQIVLGEADAAICGGVETRIEAVPIAGFAQMRIVMSTNNDDPAGACRPFDRDRDGFVFGEGGALLLIETEEHAKARGANILARIMGASITSDGFHMVAPDPNGERAGHAITRAIQLAGLAPGDIDHVNAHATGTQVGDLAEGRAINNALGGNRPAVYAPKSALGHSVGAVGAVESILTVLALRDQVIPPTLNLVNLDPEIDLDVVAGEPRPGNYRYAINNSFGFGGHNVAIAFGRY</sequence>
<gene>
    <name type="primary">kasB</name>
    <name type="ordered locus">MT2306</name>
</gene>
<evidence type="ECO:0000250" key="1">
    <source>
        <dbReference type="UniProtKB" id="P9WQD7"/>
    </source>
</evidence>
<evidence type="ECO:0000255" key="2">
    <source>
        <dbReference type="PROSITE-ProRule" id="PRU01348"/>
    </source>
</evidence>
<evidence type="ECO:0000305" key="3"/>
<feature type="chain" id="PRO_0000426794" description="3-oxoacyl-[acyl-carrier-protein] synthase 2">
    <location>
        <begin position="1"/>
        <end position="417"/>
    </location>
</feature>
<feature type="domain" description="Ketosynthase family 3 (KS3)" evidence="2">
    <location>
        <begin position="10"/>
        <end position="416"/>
    </location>
</feature>
<feature type="active site" description="For beta-ketoacyl synthase activity" evidence="2">
    <location>
        <position position="170"/>
    </location>
</feature>
<feature type="active site" description="For beta-ketoacyl synthase activity" evidence="2">
    <location>
        <position position="311"/>
    </location>
</feature>
<feature type="active site" description="For beta-ketoacyl synthase activity" evidence="2">
    <location>
        <position position="346"/>
    </location>
</feature>
<accession>P9WQD6</accession>
<accession>L0TBY1</accession>
<accession>P63456</accession>
<accession>Q10525</accession>
<organism>
    <name type="scientific">Mycobacterium tuberculosis (strain CDC 1551 / Oshkosh)</name>
    <dbReference type="NCBI Taxonomy" id="83331"/>
    <lineage>
        <taxon>Bacteria</taxon>
        <taxon>Bacillati</taxon>
        <taxon>Actinomycetota</taxon>
        <taxon>Actinomycetes</taxon>
        <taxon>Mycobacteriales</taxon>
        <taxon>Mycobacteriaceae</taxon>
        <taxon>Mycobacterium</taxon>
        <taxon>Mycobacterium tuberculosis complex</taxon>
    </lineage>
</organism>
<dbReference type="EC" id="2.3.1.294" evidence="1"/>
<dbReference type="EMBL" id="AE000516">
    <property type="protein sequence ID" value="AAK46590.1"/>
    <property type="molecule type" value="Genomic_DNA"/>
</dbReference>
<dbReference type="PIR" id="B70779">
    <property type="entry name" value="B70779"/>
</dbReference>
<dbReference type="RefSeq" id="WP_003411576.1">
    <property type="nucleotide sequence ID" value="NZ_KK341227.1"/>
</dbReference>
<dbReference type="SMR" id="P9WQD6"/>
<dbReference type="GeneID" id="45426226"/>
<dbReference type="KEGG" id="mtc:MT2306"/>
<dbReference type="HOGENOM" id="CLU_000022_69_2_11"/>
<dbReference type="UniPathway" id="UPA00915"/>
<dbReference type="PHI-base" id="PHI:4196"/>
<dbReference type="Proteomes" id="UP000001020">
    <property type="component" value="Chromosome"/>
</dbReference>
<dbReference type="GO" id="GO:0005829">
    <property type="term" value="C:cytosol"/>
    <property type="evidence" value="ECO:0007669"/>
    <property type="project" value="TreeGrafter"/>
</dbReference>
<dbReference type="GO" id="GO:0004315">
    <property type="term" value="F:3-oxoacyl-[acyl-carrier-protein] synthase activity"/>
    <property type="evidence" value="ECO:0007669"/>
    <property type="project" value="TreeGrafter"/>
</dbReference>
<dbReference type="GO" id="GO:0006633">
    <property type="term" value="P:fatty acid biosynthetic process"/>
    <property type="evidence" value="ECO:0007669"/>
    <property type="project" value="UniProtKB-KW"/>
</dbReference>
<dbReference type="CDD" id="cd00834">
    <property type="entry name" value="KAS_I_II"/>
    <property type="match status" value="1"/>
</dbReference>
<dbReference type="FunFam" id="3.40.47.10:FF:000029">
    <property type="entry name" value="3-oxoacyl-[acyl-carrier-protein] synthase 1"/>
    <property type="match status" value="1"/>
</dbReference>
<dbReference type="FunFam" id="3.40.47.10:FF:000018">
    <property type="entry name" value="3-oxoacyl-[acyl-carrier-protein] synthase 2"/>
    <property type="match status" value="1"/>
</dbReference>
<dbReference type="Gene3D" id="3.40.47.10">
    <property type="match status" value="2"/>
</dbReference>
<dbReference type="InterPro" id="IPR000794">
    <property type="entry name" value="Beta-ketoacyl_synthase"/>
</dbReference>
<dbReference type="InterPro" id="IPR014031">
    <property type="entry name" value="Ketoacyl_synth_C"/>
</dbReference>
<dbReference type="InterPro" id="IPR014030">
    <property type="entry name" value="Ketoacyl_synth_N"/>
</dbReference>
<dbReference type="InterPro" id="IPR020841">
    <property type="entry name" value="PKS_Beta-ketoAc_synthase_dom"/>
</dbReference>
<dbReference type="InterPro" id="IPR016039">
    <property type="entry name" value="Thiolase-like"/>
</dbReference>
<dbReference type="NCBIfam" id="NF005589">
    <property type="entry name" value="PRK07314.1"/>
    <property type="match status" value="1"/>
</dbReference>
<dbReference type="NCBIfam" id="NF005916">
    <property type="entry name" value="PRK07910.1"/>
    <property type="match status" value="1"/>
</dbReference>
<dbReference type="PANTHER" id="PTHR11712:SF336">
    <property type="entry name" value="3-OXOACYL-[ACYL-CARRIER-PROTEIN] SYNTHASE, MITOCHONDRIAL"/>
    <property type="match status" value="1"/>
</dbReference>
<dbReference type="PANTHER" id="PTHR11712">
    <property type="entry name" value="POLYKETIDE SYNTHASE-RELATED"/>
    <property type="match status" value="1"/>
</dbReference>
<dbReference type="Pfam" id="PF00109">
    <property type="entry name" value="ketoacyl-synt"/>
    <property type="match status" value="1"/>
</dbReference>
<dbReference type="Pfam" id="PF02801">
    <property type="entry name" value="Ketoacyl-synt_C"/>
    <property type="match status" value="1"/>
</dbReference>
<dbReference type="SMART" id="SM00825">
    <property type="entry name" value="PKS_KS"/>
    <property type="match status" value="1"/>
</dbReference>
<dbReference type="SUPFAM" id="SSF53901">
    <property type="entry name" value="Thiolase-like"/>
    <property type="match status" value="2"/>
</dbReference>
<dbReference type="PROSITE" id="PS52004">
    <property type="entry name" value="KS3_2"/>
    <property type="match status" value="1"/>
</dbReference>
<protein>
    <recommendedName>
        <fullName>3-oxoacyl-[acyl-carrier-protein] synthase 2</fullName>
        <ecNumber evidence="1">2.3.1.294</ecNumber>
    </recommendedName>
    <alternativeName>
        <fullName>Beta-ketoacyl-ACP synthase 2</fullName>
        <shortName>KAS 2</shortName>
    </alternativeName>
</protein>
<proteinExistence type="inferred from homology"/>
<keyword id="KW-0012">Acyltransferase</keyword>
<keyword id="KW-0963">Cytoplasm</keyword>
<keyword id="KW-0275">Fatty acid biosynthesis</keyword>
<keyword id="KW-0276">Fatty acid metabolism</keyword>
<keyword id="KW-0444">Lipid biosynthesis</keyword>
<keyword id="KW-0443">Lipid metabolism</keyword>
<keyword id="KW-1185">Reference proteome</keyword>
<keyword id="KW-0808">Transferase</keyword>
<comment type="function">
    <text evidence="1">Part of the mycobacterial fatty acid elongation system FAS-II, which is involved in mycolic acid biosynthesis. Catalyzes the elongation of long chain acyl-ACP substrates by the addition of two carbons from malonyl-ACP to an acyl acceptor. Involved in extension of the mycolate chains to full lengths and produces longer chain multiunsaturated hydrocarbons averaging 54 carbons in length.</text>
</comment>
<comment type="catalytic activity">
    <reaction evidence="1">
        <text>an ultra-long-chain di-unsaturated fatty acyl-[ACP] + malonyl-[ACP] + H(+) = a 3-oxo-ultra-long-chain di-unsaturated fatty acyl-[ACP] + holo-[ACP] + CO2</text>
        <dbReference type="Rhea" id="RHEA:65308"/>
        <dbReference type="Rhea" id="RHEA-COMP:9623"/>
        <dbReference type="Rhea" id="RHEA-COMP:9685"/>
        <dbReference type="Rhea" id="RHEA-COMP:16767"/>
        <dbReference type="Rhea" id="RHEA-COMP:16774"/>
        <dbReference type="ChEBI" id="CHEBI:15378"/>
        <dbReference type="ChEBI" id="CHEBI:16526"/>
        <dbReference type="ChEBI" id="CHEBI:64479"/>
        <dbReference type="ChEBI" id="CHEBI:78449"/>
        <dbReference type="ChEBI" id="CHEBI:156401"/>
        <dbReference type="ChEBI" id="CHEBI:156402"/>
        <dbReference type="EC" id="2.3.1.294"/>
    </reaction>
    <physiologicalReaction direction="left-to-right" evidence="1">
        <dbReference type="Rhea" id="RHEA:65309"/>
    </physiologicalReaction>
</comment>
<comment type="pathway">
    <text evidence="1">Lipid metabolism; mycolic acid biosynthesis.</text>
</comment>
<comment type="subcellular location">
    <subcellularLocation>
        <location evidence="1">Cytoplasm</location>
    </subcellularLocation>
</comment>
<comment type="similarity">
    <text evidence="3">Belongs to the thiolase-like superfamily. Beta-ketoacyl-ACP synthases family.</text>
</comment>
<reference key="1">
    <citation type="journal article" date="2002" name="J. Bacteriol.">
        <title>Whole-genome comparison of Mycobacterium tuberculosis clinical and laboratory strains.</title>
        <authorList>
            <person name="Fleischmann R.D."/>
            <person name="Alland D."/>
            <person name="Eisen J.A."/>
            <person name="Carpenter L."/>
            <person name="White O."/>
            <person name="Peterson J.D."/>
            <person name="DeBoy R.T."/>
            <person name="Dodson R.J."/>
            <person name="Gwinn M.L."/>
            <person name="Haft D.H."/>
            <person name="Hickey E.K."/>
            <person name="Kolonay J.F."/>
            <person name="Nelson W.C."/>
            <person name="Umayam L.A."/>
            <person name="Ermolaeva M.D."/>
            <person name="Salzberg S.L."/>
            <person name="Delcher A."/>
            <person name="Utterback T.R."/>
            <person name="Weidman J.F."/>
            <person name="Khouri H.M."/>
            <person name="Gill J."/>
            <person name="Mikula A."/>
            <person name="Bishai W."/>
            <person name="Jacobs W.R. Jr."/>
            <person name="Venter J.C."/>
            <person name="Fraser C.M."/>
        </authorList>
    </citation>
    <scope>NUCLEOTIDE SEQUENCE [LARGE SCALE GENOMIC DNA]</scope>
    <source>
        <strain>CDC 1551 / Oshkosh</strain>
    </source>
</reference>
<name>KASB_MYCTO</name>